<sequence>MRVLIEENYREMSKKAALLVASQVILKPDSVLGLATGSTPIGMYQELAEMYKEGEIDFSEVTTFNLDEYYNLPPEAPQSYHYYMKENFFKHVNIHPARTHIPDGMAGDVEAECQDYEEKIRRSGGIDLQILGIGPNGHIGFNEPDERLNVTTHLVDLTEETIQANSRFFDSPDDVPRKAISVGMATILKARRIILLASGRNKARAIKETVSGYVSTKVPASLLQTHPEVTLIIDKEAASLL</sequence>
<comment type="function">
    <text evidence="1">Catalyzes the reversible isomerization-deamination of glucosamine 6-phosphate (GlcN6P) to form fructose 6-phosphate (Fru6P) and ammonium ion.</text>
</comment>
<comment type="catalytic activity">
    <reaction evidence="1">
        <text>alpha-D-glucosamine 6-phosphate + H2O = beta-D-fructose 6-phosphate + NH4(+)</text>
        <dbReference type="Rhea" id="RHEA:12172"/>
        <dbReference type="ChEBI" id="CHEBI:15377"/>
        <dbReference type="ChEBI" id="CHEBI:28938"/>
        <dbReference type="ChEBI" id="CHEBI:57634"/>
        <dbReference type="ChEBI" id="CHEBI:75989"/>
        <dbReference type="EC" id="3.5.99.6"/>
    </reaction>
</comment>
<comment type="pathway">
    <text evidence="1">Amino-sugar metabolism; N-acetylneuraminate degradation; D-fructose 6-phosphate from N-acetylneuraminate: step 5/5.</text>
</comment>
<comment type="similarity">
    <text evidence="1">Belongs to the glucosamine/galactosamine-6-phosphate isomerase family. NagB subfamily.</text>
</comment>
<keyword id="KW-0119">Carbohydrate metabolism</keyword>
<keyword id="KW-0378">Hydrolase</keyword>
<keyword id="KW-1185">Reference proteome</keyword>
<reference key="1">
    <citation type="journal article" date="2009" name="PLoS ONE">
        <title>Genome analysis of the anaerobic thermohalophilic bacterium Halothermothrix orenii.</title>
        <authorList>
            <person name="Mavromatis K."/>
            <person name="Ivanova N."/>
            <person name="Anderson I."/>
            <person name="Lykidis A."/>
            <person name="Hooper S.D."/>
            <person name="Sun H."/>
            <person name="Kunin V."/>
            <person name="Lapidus A."/>
            <person name="Hugenholtz P."/>
            <person name="Patel B."/>
            <person name="Kyrpides N.C."/>
        </authorList>
    </citation>
    <scope>NUCLEOTIDE SEQUENCE [LARGE SCALE GENOMIC DNA]</scope>
    <source>
        <strain>H 168 / OCM 544 / DSM 9562</strain>
    </source>
</reference>
<organism>
    <name type="scientific">Halothermothrix orenii (strain H 168 / OCM 544 / DSM 9562)</name>
    <dbReference type="NCBI Taxonomy" id="373903"/>
    <lineage>
        <taxon>Bacteria</taxon>
        <taxon>Bacillati</taxon>
        <taxon>Bacillota</taxon>
        <taxon>Clostridia</taxon>
        <taxon>Halanaerobiales</taxon>
        <taxon>Halothermotrichaceae</taxon>
        <taxon>Halothermothrix</taxon>
    </lineage>
</organism>
<protein>
    <recommendedName>
        <fullName evidence="1">Glucosamine-6-phosphate deaminase</fullName>
        <ecNumber evidence="1">3.5.99.6</ecNumber>
    </recommendedName>
    <alternativeName>
        <fullName evidence="1">GlcN6P deaminase</fullName>
        <shortName evidence="1">GNPDA</shortName>
    </alternativeName>
    <alternativeName>
        <fullName evidence="1">Glucosamine-6-phosphate isomerase</fullName>
    </alternativeName>
</protein>
<proteinExistence type="inferred from homology"/>
<dbReference type="EC" id="3.5.99.6" evidence="1"/>
<dbReference type="EMBL" id="CP001098">
    <property type="protein sequence ID" value="ACL71037.1"/>
    <property type="molecule type" value="Genomic_DNA"/>
</dbReference>
<dbReference type="RefSeq" id="WP_015924005.1">
    <property type="nucleotide sequence ID" value="NC_011899.1"/>
</dbReference>
<dbReference type="SMR" id="B8D185"/>
<dbReference type="STRING" id="373903.Hore_22920"/>
<dbReference type="KEGG" id="hor:Hore_22920"/>
<dbReference type="eggNOG" id="COG0363">
    <property type="taxonomic scope" value="Bacteria"/>
</dbReference>
<dbReference type="HOGENOM" id="CLU_049611_0_1_9"/>
<dbReference type="OrthoDB" id="9791139at2"/>
<dbReference type="UniPathway" id="UPA00629">
    <property type="reaction ID" value="UER00684"/>
</dbReference>
<dbReference type="Proteomes" id="UP000000719">
    <property type="component" value="Chromosome"/>
</dbReference>
<dbReference type="GO" id="GO:0005737">
    <property type="term" value="C:cytoplasm"/>
    <property type="evidence" value="ECO:0007669"/>
    <property type="project" value="TreeGrafter"/>
</dbReference>
<dbReference type="GO" id="GO:0004342">
    <property type="term" value="F:glucosamine-6-phosphate deaminase activity"/>
    <property type="evidence" value="ECO:0007669"/>
    <property type="project" value="UniProtKB-UniRule"/>
</dbReference>
<dbReference type="GO" id="GO:0042802">
    <property type="term" value="F:identical protein binding"/>
    <property type="evidence" value="ECO:0007669"/>
    <property type="project" value="TreeGrafter"/>
</dbReference>
<dbReference type="GO" id="GO:0005975">
    <property type="term" value="P:carbohydrate metabolic process"/>
    <property type="evidence" value="ECO:0007669"/>
    <property type="project" value="InterPro"/>
</dbReference>
<dbReference type="GO" id="GO:0006043">
    <property type="term" value="P:glucosamine catabolic process"/>
    <property type="evidence" value="ECO:0007669"/>
    <property type="project" value="TreeGrafter"/>
</dbReference>
<dbReference type="GO" id="GO:0006046">
    <property type="term" value="P:N-acetylglucosamine catabolic process"/>
    <property type="evidence" value="ECO:0007669"/>
    <property type="project" value="TreeGrafter"/>
</dbReference>
<dbReference type="GO" id="GO:0019262">
    <property type="term" value="P:N-acetylneuraminate catabolic process"/>
    <property type="evidence" value="ECO:0007669"/>
    <property type="project" value="UniProtKB-UniRule"/>
</dbReference>
<dbReference type="CDD" id="cd01399">
    <property type="entry name" value="GlcN6P_deaminase"/>
    <property type="match status" value="1"/>
</dbReference>
<dbReference type="FunFam" id="3.40.50.1360:FF:000003">
    <property type="entry name" value="Glucosamine-6-phosphate deaminase"/>
    <property type="match status" value="1"/>
</dbReference>
<dbReference type="Gene3D" id="3.40.50.1360">
    <property type="match status" value="1"/>
</dbReference>
<dbReference type="HAMAP" id="MF_01241">
    <property type="entry name" value="GlcN6P_deamin"/>
    <property type="match status" value="1"/>
</dbReference>
<dbReference type="InterPro" id="IPR006148">
    <property type="entry name" value="Glc/Gal-6P_isomerase"/>
</dbReference>
<dbReference type="InterPro" id="IPR004547">
    <property type="entry name" value="Glucosamine6P_isomerase"/>
</dbReference>
<dbReference type="InterPro" id="IPR018321">
    <property type="entry name" value="Glucosamine6P_isomerase_CS"/>
</dbReference>
<dbReference type="InterPro" id="IPR037171">
    <property type="entry name" value="NagB/RpiA_transferase-like"/>
</dbReference>
<dbReference type="NCBIfam" id="TIGR00502">
    <property type="entry name" value="nagB"/>
    <property type="match status" value="1"/>
</dbReference>
<dbReference type="NCBIfam" id="NF001684">
    <property type="entry name" value="PRK00443.1-4"/>
    <property type="match status" value="1"/>
</dbReference>
<dbReference type="PANTHER" id="PTHR11280">
    <property type="entry name" value="GLUCOSAMINE-6-PHOSPHATE ISOMERASE"/>
    <property type="match status" value="1"/>
</dbReference>
<dbReference type="PANTHER" id="PTHR11280:SF5">
    <property type="entry name" value="GLUCOSAMINE-6-PHOSPHATE ISOMERASE"/>
    <property type="match status" value="1"/>
</dbReference>
<dbReference type="Pfam" id="PF01182">
    <property type="entry name" value="Glucosamine_iso"/>
    <property type="match status" value="1"/>
</dbReference>
<dbReference type="SUPFAM" id="SSF100950">
    <property type="entry name" value="NagB/RpiA/CoA transferase-like"/>
    <property type="match status" value="1"/>
</dbReference>
<dbReference type="PROSITE" id="PS01161">
    <property type="entry name" value="GLC_GALNAC_ISOMERASE"/>
    <property type="match status" value="1"/>
</dbReference>
<evidence type="ECO:0000255" key="1">
    <source>
        <dbReference type="HAMAP-Rule" id="MF_01241"/>
    </source>
</evidence>
<feature type="chain" id="PRO_1000165021" description="Glucosamine-6-phosphate deaminase">
    <location>
        <begin position="1"/>
        <end position="241"/>
    </location>
</feature>
<feature type="active site" description="Proton acceptor; for enolization step" evidence="1">
    <location>
        <position position="67"/>
    </location>
</feature>
<feature type="active site" description="For ring-opening step" evidence="1">
    <location>
        <position position="136"/>
    </location>
</feature>
<feature type="active site" description="Proton acceptor; for ring-opening step" evidence="1">
    <location>
        <position position="138"/>
    </location>
</feature>
<feature type="active site" description="For ring-opening step" evidence="1">
    <location>
        <position position="143"/>
    </location>
</feature>
<gene>
    <name evidence="1" type="primary">nagB</name>
    <name type="ordered locus">Hore_22920</name>
</gene>
<name>NAGB_HALOH</name>
<accession>B8D185</accession>